<evidence type="ECO:0000255" key="1">
    <source>
        <dbReference type="HAMAP-Rule" id="MF_01302"/>
    </source>
</evidence>
<evidence type="ECO:0000305" key="2"/>
<protein>
    <recommendedName>
        <fullName evidence="1">Small ribosomal subunit protein uS8</fullName>
    </recommendedName>
    <alternativeName>
        <fullName evidence="2">30S ribosomal protein S8</fullName>
    </alternativeName>
</protein>
<name>RS8_PROA2</name>
<sequence>MPVTDSIADYLTRLRNAGQAKNKTTDIPYSTQKENISKLLVEKGYIKNYTVITSDRFPFIRVELKYGSNGTFAIKEITRVSKPGRRVYEGKDLRKYLGGLGLLILSTSKGILTDKEAREQGVGGEVLFRIL</sequence>
<dbReference type="EMBL" id="CP001108">
    <property type="protein sequence ID" value="ACF47060.1"/>
    <property type="molecule type" value="Genomic_DNA"/>
</dbReference>
<dbReference type="RefSeq" id="WP_012506592.1">
    <property type="nucleotide sequence ID" value="NC_011059.1"/>
</dbReference>
<dbReference type="SMR" id="B4S5B4"/>
<dbReference type="STRING" id="290512.Paes_2050"/>
<dbReference type="KEGG" id="paa:Paes_2050"/>
<dbReference type="eggNOG" id="COG0096">
    <property type="taxonomic scope" value="Bacteria"/>
</dbReference>
<dbReference type="HOGENOM" id="CLU_098428_0_2_10"/>
<dbReference type="Proteomes" id="UP000002725">
    <property type="component" value="Chromosome"/>
</dbReference>
<dbReference type="GO" id="GO:1990904">
    <property type="term" value="C:ribonucleoprotein complex"/>
    <property type="evidence" value="ECO:0007669"/>
    <property type="project" value="UniProtKB-KW"/>
</dbReference>
<dbReference type="GO" id="GO:0005840">
    <property type="term" value="C:ribosome"/>
    <property type="evidence" value="ECO:0007669"/>
    <property type="project" value="UniProtKB-KW"/>
</dbReference>
<dbReference type="GO" id="GO:0019843">
    <property type="term" value="F:rRNA binding"/>
    <property type="evidence" value="ECO:0007669"/>
    <property type="project" value="UniProtKB-UniRule"/>
</dbReference>
<dbReference type="GO" id="GO:0003735">
    <property type="term" value="F:structural constituent of ribosome"/>
    <property type="evidence" value="ECO:0007669"/>
    <property type="project" value="InterPro"/>
</dbReference>
<dbReference type="GO" id="GO:0006412">
    <property type="term" value="P:translation"/>
    <property type="evidence" value="ECO:0007669"/>
    <property type="project" value="UniProtKB-UniRule"/>
</dbReference>
<dbReference type="FunFam" id="3.30.1490.10:FF:000001">
    <property type="entry name" value="30S ribosomal protein S8"/>
    <property type="match status" value="1"/>
</dbReference>
<dbReference type="Gene3D" id="3.30.1370.30">
    <property type="match status" value="1"/>
</dbReference>
<dbReference type="Gene3D" id="3.30.1490.10">
    <property type="match status" value="1"/>
</dbReference>
<dbReference type="HAMAP" id="MF_01302_B">
    <property type="entry name" value="Ribosomal_uS8_B"/>
    <property type="match status" value="1"/>
</dbReference>
<dbReference type="InterPro" id="IPR000630">
    <property type="entry name" value="Ribosomal_uS8"/>
</dbReference>
<dbReference type="InterPro" id="IPR047863">
    <property type="entry name" value="Ribosomal_uS8_CS"/>
</dbReference>
<dbReference type="InterPro" id="IPR035987">
    <property type="entry name" value="Ribosomal_uS8_sf"/>
</dbReference>
<dbReference type="NCBIfam" id="NF001109">
    <property type="entry name" value="PRK00136.1"/>
    <property type="match status" value="1"/>
</dbReference>
<dbReference type="PANTHER" id="PTHR11758">
    <property type="entry name" value="40S RIBOSOMAL PROTEIN S15A"/>
    <property type="match status" value="1"/>
</dbReference>
<dbReference type="Pfam" id="PF00410">
    <property type="entry name" value="Ribosomal_S8"/>
    <property type="match status" value="1"/>
</dbReference>
<dbReference type="SUPFAM" id="SSF56047">
    <property type="entry name" value="Ribosomal protein S8"/>
    <property type="match status" value="1"/>
</dbReference>
<dbReference type="PROSITE" id="PS00053">
    <property type="entry name" value="RIBOSOMAL_S8"/>
    <property type="match status" value="1"/>
</dbReference>
<reference key="1">
    <citation type="submission" date="2008-06" db="EMBL/GenBank/DDBJ databases">
        <title>Complete sequence of chromosome of Prosthecochloris aestuarii DSM 271.</title>
        <authorList>
            <consortium name="US DOE Joint Genome Institute"/>
            <person name="Lucas S."/>
            <person name="Copeland A."/>
            <person name="Lapidus A."/>
            <person name="Glavina del Rio T."/>
            <person name="Dalin E."/>
            <person name="Tice H."/>
            <person name="Bruce D."/>
            <person name="Goodwin L."/>
            <person name="Pitluck S."/>
            <person name="Schmutz J."/>
            <person name="Larimer F."/>
            <person name="Land M."/>
            <person name="Hauser L."/>
            <person name="Kyrpides N."/>
            <person name="Anderson I."/>
            <person name="Liu Z."/>
            <person name="Li T."/>
            <person name="Zhao F."/>
            <person name="Overmann J."/>
            <person name="Bryant D.A."/>
            <person name="Richardson P."/>
        </authorList>
    </citation>
    <scope>NUCLEOTIDE SEQUENCE [LARGE SCALE GENOMIC DNA]</scope>
    <source>
        <strain>DSM 271 / SK 413</strain>
    </source>
</reference>
<proteinExistence type="inferred from homology"/>
<gene>
    <name evidence="1" type="primary">rpsH</name>
    <name type="ordered locus">Paes_2050</name>
</gene>
<keyword id="KW-0687">Ribonucleoprotein</keyword>
<keyword id="KW-0689">Ribosomal protein</keyword>
<keyword id="KW-0694">RNA-binding</keyword>
<keyword id="KW-0699">rRNA-binding</keyword>
<organism>
    <name type="scientific">Prosthecochloris aestuarii (strain DSM 271 / SK 413)</name>
    <dbReference type="NCBI Taxonomy" id="290512"/>
    <lineage>
        <taxon>Bacteria</taxon>
        <taxon>Pseudomonadati</taxon>
        <taxon>Chlorobiota</taxon>
        <taxon>Chlorobiia</taxon>
        <taxon>Chlorobiales</taxon>
        <taxon>Chlorobiaceae</taxon>
        <taxon>Prosthecochloris</taxon>
    </lineage>
</organism>
<comment type="function">
    <text evidence="1">One of the primary rRNA binding proteins, it binds directly to 16S rRNA central domain where it helps coordinate assembly of the platform of the 30S subunit.</text>
</comment>
<comment type="subunit">
    <text evidence="1">Part of the 30S ribosomal subunit. Contacts proteins S5 and S12.</text>
</comment>
<comment type="similarity">
    <text evidence="1">Belongs to the universal ribosomal protein uS8 family.</text>
</comment>
<accession>B4S5B4</accession>
<feature type="chain" id="PRO_1000140594" description="Small ribosomal subunit protein uS8">
    <location>
        <begin position="1"/>
        <end position="131"/>
    </location>
</feature>